<protein>
    <recommendedName>
        <fullName evidence="1">Large ribosomal subunit protein bL28</fullName>
    </recommendedName>
    <alternativeName>
        <fullName evidence="2">50S ribosomal protein L28</fullName>
    </alternativeName>
</protein>
<accession>Q7NEP1</accession>
<proteinExistence type="inferred from homology"/>
<evidence type="ECO:0000255" key="1">
    <source>
        <dbReference type="HAMAP-Rule" id="MF_00373"/>
    </source>
</evidence>
<evidence type="ECO:0000305" key="2"/>
<reference key="1">
    <citation type="journal article" date="2003" name="DNA Res.">
        <title>Complete genome structure of Gloeobacter violaceus PCC 7421, a cyanobacterium that lacks thylakoids.</title>
        <authorList>
            <person name="Nakamura Y."/>
            <person name="Kaneko T."/>
            <person name="Sato S."/>
            <person name="Mimuro M."/>
            <person name="Miyashita H."/>
            <person name="Tsuchiya T."/>
            <person name="Sasamoto S."/>
            <person name="Watanabe A."/>
            <person name="Kawashima K."/>
            <person name="Kishida Y."/>
            <person name="Kiyokawa C."/>
            <person name="Kohara M."/>
            <person name="Matsumoto M."/>
            <person name="Matsuno A."/>
            <person name="Nakazaki N."/>
            <person name="Shimpo S."/>
            <person name="Takeuchi C."/>
            <person name="Yamada M."/>
            <person name="Tabata S."/>
        </authorList>
    </citation>
    <scope>NUCLEOTIDE SEQUENCE [LARGE SCALE GENOMIC DNA]</scope>
    <source>
        <strain>ATCC 29082 / PCC 7421</strain>
    </source>
</reference>
<name>RL28_GLOVI</name>
<dbReference type="EMBL" id="BA000045">
    <property type="protein sequence ID" value="BAC91779.1"/>
    <property type="status" value="ALT_INIT"/>
    <property type="molecule type" value="Genomic_DNA"/>
</dbReference>
<dbReference type="RefSeq" id="NP_926784.2">
    <property type="nucleotide sequence ID" value="NC_005125.1"/>
</dbReference>
<dbReference type="RefSeq" id="WP_011143826.1">
    <property type="nucleotide sequence ID" value="NC_005125.1"/>
</dbReference>
<dbReference type="SMR" id="Q7NEP1"/>
<dbReference type="FunCoup" id="Q7NEP1">
    <property type="interactions" value="53"/>
</dbReference>
<dbReference type="STRING" id="251221.gene:10761355"/>
<dbReference type="EnsemblBacteria" id="BAC91779">
    <property type="protein sequence ID" value="BAC91779"/>
    <property type="gene ID" value="BAC91779"/>
</dbReference>
<dbReference type="KEGG" id="gvi:gsr3838"/>
<dbReference type="PATRIC" id="fig|251221.4.peg.3872"/>
<dbReference type="eggNOG" id="COG0227">
    <property type="taxonomic scope" value="Bacteria"/>
</dbReference>
<dbReference type="HOGENOM" id="CLU_064548_3_0_3"/>
<dbReference type="InParanoid" id="Q7NEP1"/>
<dbReference type="OrthoDB" id="9805609at2"/>
<dbReference type="PhylomeDB" id="Q7NEP1"/>
<dbReference type="Proteomes" id="UP000000557">
    <property type="component" value="Chromosome"/>
</dbReference>
<dbReference type="GO" id="GO:1990904">
    <property type="term" value="C:ribonucleoprotein complex"/>
    <property type="evidence" value="ECO:0007669"/>
    <property type="project" value="UniProtKB-KW"/>
</dbReference>
<dbReference type="GO" id="GO:0005840">
    <property type="term" value="C:ribosome"/>
    <property type="evidence" value="ECO:0007669"/>
    <property type="project" value="UniProtKB-KW"/>
</dbReference>
<dbReference type="GO" id="GO:0003735">
    <property type="term" value="F:structural constituent of ribosome"/>
    <property type="evidence" value="ECO:0000318"/>
    <property type="project" value="GO_Central"/>
</dbReference>
<dbReference type="GO" id="GO:0006412">
    <property type="term" value="P:translation"/>
    <property type="evidence" value="ECO:0007669"/>
    <property type="project" value="UniProtKB-UniRule"/>
</dbReference>
<dbReference type="Gene3D" id="2.30.170.40">
    <property type="entry name" value="Ribosomal protein L28/L24"/>
    <property type="match status" value="1"/>
</dbReference>
<dbReference type="HAMAP" id="MF_00373">
    <property type="entry name" value="Ribosomal_bL28"/>
    <property type="match status" value="1"/>
</dbReference>
<dbReference type="InterPro" id="IPR026569">
    <property type="entry name" value="Ribosomal_bL28"/>
</dbReference>
<dbReference type="InterPro" id="IPR034704">
    <property type="entry name" value="Ribosomal_bL28/bL31-like_sf"/>
</dbReference>
<dbReference type="InterPro" id="IPR001383">
    <property type="entry name" value="Ribosomal_bL28_bact-type"/>
</dbReference>
<dbReference type="InterPro" id="IPR037147">
    <property type="entry name" value="Ribosomal_bL28_sf"/>
</dbReference>
<dbReference type="NCBIfam" id="TIGR00009">
    <property type="entry name" value="L28"/>
    <property type="match status" value="1"/>
</dbReference>
<dbReference type="PANTHER" id="PTHR13528">
    <property type="entry name" value="39S RIBOSOMAL PROTEIN L28, MITOCHONDRIAL"/>
    <property type="match status" value="1"/>
</dbReference>
<dbReference type="PANTHER" id="PTHR13528:SF2">
    <property type="entry name" value="LARGE RIBOSOMAL SUBUNIT PROTEIN BL28M"/>
    <property type="match status" value="1"/>
</dbReference>
<dbReference type="Pfam" id="PF00830">
    <property type="entry name" value="Ribosomal_L28"/>
    <property type="match status" value="1"/>
</dbReference>
<dbReference type="SUPFAM" id="SSF143800">
    <property type="entry name" value="L28p-like"/>
    <property type="match status" value="1"/>
</dbReference>
<organism>
    <name type="scientific">Gloeobacter violaceus (strain ATCC 29082 / PCC 7421)</name>
    <dbReference type="NCBI Taxonomy" id="251221"/>
    <lineage>
        <taxon>Bacteria</taxon>
        <taxon>Bacillati</taxon>
        <taxon>Cyanobacteriota</taxon>
        <taxon>Cyanophyceae</taxon>
        <taxon>Gloeobacterales</taxon>
        <taxon>Gloeobacteraceae</taxon>
        <taxon>Gloeobacter</taxon>
    </lineage>
</organism>
<feature type="chain" id="PRO_0000178477" description="Large ribosomal subunit protein bL28">
    <location>
        <begin position="1"/>
        <end position="81"/>
    </location>
</feature>
<gene>
    <name evidence="1" type="primary">rpmB</name>
    <name evidence="1" type="synonym">rpl28</name>
    <name type="ordered locus">gsr3838</name>
</gene>
<comment type="similarity">
    <text evidence="1">Belongs to the bacterial ribosomal protein bL28 family.</text>
</comment>
<comment type="sequence caution" evidence="2">
    <conflict type="erroneous initiation">
        <sequence resource="EMBL-CDS" id="BAC91779"/>
    </conflict>
</comment>
<sequence>MSRKCMLTGKKANNAYSVSFSHRRNKRLQMANLQWKRIWDDQQGCFVRLKLSTKAIKTLEHRSLHALAKEAGLDLSKYVVK</sequence>
<keyword id="KW-1185">Reference proteome</keyword>
<keyword id="KW-0687">Ribonucleoprotein</keyword>
<keyword id="KW-0689">Ribosomal protein</keyword>